<sequence length="594" mass="64784">MQVSKDALKQLIRAGRGVIPASKVLEGGYLVNVMSNEVYLADVAIYEERIVAIGKVEEYKGPETEVIDVTGLYLLPGLIDGHLHSECSKLSITSFAKAVVPCGTTSIVSGLDEYISVSGLEGLQEVFKEVKKSPLKVFWGAPYKTPYTFPKSTVAFNFTEEVHQEVQQWPECFGVWETVREAVQEEDEDTLGALATAQNNRLPIFGCAPMARGKELNGYLCAGVRLDHESYDHEEVVEKMRNGMHMLIRESSVTHFLEENIRAVTEVNPYLARRVSFCTDDVTATDILEKGHMDNVVRQAIKAGVEPITAIQMATINSAEAYRIDHLVGSITPGKIADIVMVDSLEGFQVQAVLTDGKLVARDKKMSYELKAPARSSVLSCALKCATTTPEDFQYRVEIEQGTAEVLSMNVKGPFVRKRRDVTLQVANHIVQADTENDVLMVSVLERFGRNGNKSLAFCSGWKLKKGAMASSAAPDDNNIIVMGADASDMSIAVNHLIENGGGQVIVADGEILEFLALPVGGIVSDLEAEEIARQESLLTKAANSLGCDLPDPLMYMFFLPITAIPDYAITDVGPVDCIALTTFDPILALNPGK</sequence>
<reference key="1">
    <citation type="journal article" date="2004" name="Environ. Microbiol.">
        <title>The genome of Desulfotalea psychrophila, a sulfate-reducing bacterium from permanently cold Arctic sediments.</title>
        <authorList>
            <person name="Rabus R."/>
            <person name="Ruepp A."/>
            <person name="Frickey T."/>
            <person name="Rattei T."/>
            <person name="Fartmann B."/>
            <person name="Stark M."/>
            <person name="Bauer M."/>
            <person name="Zibat A."/>
            <person name="Lombardot T."/>
            <person name="Becker I."/>
            <person name="Amann J."/>
            <person name="Gellner K."/>
            <person name="Teeling H."/>
            <person name="Leuschner W.D."/>
            <person name="Gloeckner F.-O."/>
            <person name="Lupas A.N."/>
            <person name="Amann R."/>
            <person name="Klenk H.-P."/>
        </authorList>
    </citation>
    <scope>NUCLEOTIDE SEQUENCE [LARGE SCALE GENOMIC DNA]</scope>
    <source>
        <strain>DSM 12343 / LSv54</strain>
    </source>
</reference>
<comment type="catalytic activity">
    <reaction evidence="1">
        <text>adenine + H2O + H(+) = hypoxanthine + NH4(+)</text>
        <dbReference type="Rhea" id="RHEA:23688"/>
        <dbReference type="ChEBI" id="CHEBI:15377"/>
        <dbReference type="ChEBI" id="CHEBI:15378"/>
        <dbReference type="ChEBI" id="CHEBI:16708"/>
        <dbReference type="ChEBI" id="CHEBI:17368"/>
        <dbReference type="ChEBI" id="CHEBI:28938"/>
        <dbReference type="EC" id="3.5.4.2"/>
    </reaction>
</comment>
<comment type="cofactor">
    <cofactor evidence="1">
        <name>Mn(2+)</name>
        <dbReference type="ChEBI" id="CHEBI:29035"/>
    </cofactor>
</comment>
<comment type="similarity">
    <text evidence="1">Belongs to the metallo-dependent hydrolases superfamily. Adenine deaminase family.</text>
</comment>
<protein>
    <recommendedName>
        <fullName evidence="1">Adenine deaminase 1</fullName>
        <shortName evidence="1">Adenase 1</shortName>
        <shortName evidence="1">Adenine aminase 1</shortName>
        <ecNumber evidence="1">3.5.4.2</ecNumber>
    </recommendedName>
</protein>
<organism>
    <name type="scientific">Desulfotalea psychrophila (strain LSv54 / DSM 12343)</name>
    <dbReference type="NCBI Taxonomy" id="177439"/>
    <lineage>
        <taxon>Bacteria</taxon>
        <taxon>Pseudomonadati</taxon>
        <taxon>Thermodesulfobacteriota</taxon>
        <taxon>Desulfobulbia</taxon>
        <taxon>Desulfobulbales</taxon>
        <taxon>Desulfocapsaceae</taxon>
        <taxon>Desulfotalea</taxon>
    </lineage>
</organism>
<feature type="chain" id="PRO_0000142417" description="Adenine deaminase 1">
    <location>
        <begin position="1"/>
        <end position="594"/>
    </location>
</feature>
<keyword id="KW-0378">Hydrolase</keyword>
<keyword id="KW-0464">Manganese</keyword>
<keyword id="KW-1185">Reference proteome</keyword>
<accession>Q6ANH2</accession>
<gene>
    <name evidence="1" type="primary">ade1</name>
    <name type="ordered locus">DP1373</name>
</gene>
<proteinExistence type="inferred from homology"/>
<dbReference type="EC" id="3.5.4.2" evidence="1"/>
<dbReference type="EMBL" id="CR522870">
    <property type="protein sequence ID" value="CAG36102.1"/>
    <property type="molecule type" value="Genomic_DNA"/>
</dbReference>
<dbReference type="RefSeq" id="WP_011188614.1">
    <property type="nucleotide sequence ID" value="NC_006138.1"/>
</dbReference>
<dbReference type="SMR" id="Q6ANH2"/>
<dbReference type="STRING" id="177439.DP1373"/>
<dbReference type="KEGG" id="dps:DP1373"/>
<dbReference type="eggNOG" id="COG1001">
    <property type="taxonomic scope" value="Bacteria"/>
</dbReference>
<dbReference type="HOGENOM" id="CLU_027935_0_0_7"/>
<dbReference type="OrthoDB" id="9775607at2"/>
<dbReference type="Proteomes" id="UP000000602">
    <property type="component" value="Chromosome"/>
</dbReference>
<dbReference type="GO" id="GO:0000034">
    <property type="term" value="F:adenine deaminase activity"/>
    <property type="evidence" value="ECO:0007669"/>
    <property type="project" value="UniProtKB-UniRule"/>
</dbReference>
<dbReference type="GO" id="GO:0006146">
    <property type="term" value="P:adenine catabolic process"/>
    <property type="evidence" value="ECO:0007669"/>
    <property type="project" value="InterPro"/>
</dbReference>
<dbReference type="Gene3D" id="3.20.20.140">
    <property type="entry name" value="Metal-dependent hydrolases"/>
    <property type="match status" value="1"/>
</dbReference>
<dbReference type="Gene3D" id="2.30.40.10">
    <property type="entry name" value="Urease, subunit C, domain 1"/>
    <property type="match status" value="1"/>
</dbReference>
<dbReference type="HAMAP" id="MF_01518">
    <property type="entry name" value="Adenine_deamin"/>
    <property type="match status" value="1"/>
</dbReference>
<dbReference type="InterPro" id="IPR006679">
    <property type="entry name" value="Adenine_deam"/>
</dbReference>
<dbReference type="InterPro" id="IPR026912">
    <property type="entry name" value="Adenine_deam_C"/>
</dbReference>
<dbReference type="InterPro" id="IPR006680">
    <property type="entry name" value="Amidohydro-rel"/>
</dbReference>
<dbReference type="InterPro" id="IPR011059">
    <property type="entry name" value="Metal-dep_hydrolase_composite"/>
</dbReference>
<dbReference type="InterPro" id="IPR032466">
    <property type="entry name" value="Metal_Hydrolase"/>
</dbReference>
<dbReference type="PANTHER" id="PTHR11113:SF2">
    <property type="entry name" value="ADENINE DEAMINASE"/>
    <property type="match status" value="1"/>
</dbReference>
<dbReference type="PANTHER" id="PTHR11113">
    <property type="entry name" value="N-ACETYLGLUCOSAMINE-6-PHOSPHATE DEACETYLASE"/>
    <property type="match status" value="1"/>
</dbReference>
<dbReference type="Pfam" id="PF13382">
    <property type="entry name" value="Adenine_deam_C"/>
    <property type="match status" value="1"/>
</dbReference>
<dbReference type="Pfam" id="PF01979">
    <property type="entry name" value="Amidohydro_1"/>
    <property type="match status" value="1"/>
</dbReference>
<dbReference type="SUPFAM" id="SSF51338">
    <property type="entry name" value="Composite domain of metallo-dependent hydrolases"/>
    <property type="match status" value="1"/>
</dbReference>
<dbReference type="SUPFAM" id="SSF51556">
    <property type="entry name" value="Metallo-dependent hydrolases"/>
    <property type="match status" value="1"/>
</dbReference>
<evidence type="ECO:0000255" key="1">
    <source>
        <dbReference type="HAMAP-Rule" id="MF_01518"/>
    </source>
</evidence>
<name>ADEC1_DESPS</name>